<gene>
    <name evidence="1" type="primary">fdhD</name>
    <name type="ordered locus">ECUMN_4426</name>
</gene>
<accession>B7NFJ6</accession>
<proteinExistence type="inferred from homology"/>
<protein>
    <recommendedName>
        <fullName evidence="1">Sulfur carrier protein FdhD</fullName>
    </recommendedName>
</protein>
<evidence type="ECO:0000255" key="1">
    <source>
        <dbReference type="HAMAP-Rule" id="MF_00187"/>
    </source>
</evidence>
<comment type="function">
    <text evidence="1">Required for formate dehydrogenase (FDH) activity. Acts as a sulfur carrier protein that transfers sulfur from IscS to the molybdenum cofactor prior to its insertion into FDH.</text>
</comment>
<comment type="subcellular location">
    <subcellularLocation>
        <location evidence="1">Cytoplasm</location>
    </subcellularLocation>
</comment>
<comment type="similarity">
    <text evidence="1">Belongs to the FdhD family.</text>
</comment>
<feature type="chain" id="PRO_1000118560" description="Sulfur carrier protein FdhD">
    <location>
        <begin position="1"/>
        <end position="277"/>
    </location>
</feature>
<feature type="active site" description="Cysteine persulfide intermediate" evidence="1">
    <location>
        <position position="121"/>
    </location>
</feature>
<feature type="binding site" evidence="1">
    <location>
        <begin position="260"/>
        <end position="265"/>
    </location>
    <ligand>
        <name>Mo-bis(molybdopterin guanine dinucleotide)</name>
        <dbReference type="ChEBI" id="CHEBI:60539"/>
    </ligand>
</feature>
<organism>
    <name type="scientific">Escherichia coli O17:K52:H18 (strain UMN026 / ExPEC)</name>
    <dbReference type="NCBI Taxonomy" id="585056"/>
    <lineage>
        <taxon>Bacteria</taxon>
        <taxon>Pseudomonadati</taxon>
        <taxon>Pseudomonadota</taxon>
        <taxon>Gammaproteobacteria</taxon>
        <taxon>Enterobacterales</taxon>
        <taxon>Enterobacteriaceae</taxon>
        <taxon>Escherichia</taxon>
    </lineage>
</organism>
<dbReference type="EMBL" id="CU928163">
    <property type="protein sequence ID" value="CAR15553.1"/>
    <property type="molecule type" value="Genomic_DNA"/>
</dbReference>
<dbReference type="RefSeq" id="WP_000753589.1">
    <property type="nucleotide sequence ID" value="NC_011751.1"/>
</dbReference>
<dbReference type="RefSeq" id="YP_002415043.1">
    <property type="nucleotide sequence ID" value="NC_011751.1"/>
</dbReference>
<dbReference type="SMR" id="B7NFJ6"/>
<dbReference type="STRING" id="585056.ECUMN_4426"/>
<dbReference type="GeneID" id="75174135"/>
<dbReference type="KEGG" id="eum:ECUMN_4426"/>
<dbReference type="PATRIC" id="fig|585056.7.peg.4595"/>
<dbReference type="HOGENOM" id="CLU_056887_2_0_6"/>
<dbReference type="Proteomes" id="UP000007097">
    <property type="component" value="Chromosome"/>
</dbReference>
<dbReference type="GO" id="GO:0005737">
    <property type="term" value="C:cytoplasm"/>
    <property type="evidence" value="ECO:0007669"/>
    <property type="project" value="UniProtKB-SubCell"/>
</dbReference>
<dbReference type="GO" id="GO:0097163">
    <property type="term" value="F:sulfur carrier activity"/>
    <property type="evidence" value="ECO:0007669"/>
    <property type="project" value="UniProtKB-UniRule"/>
</dbReference>
<dbReference type="GO" id="GO:0016783">
    <property type="term" value="F:sulfurtransferase activity"/>
    <property type="evidence" value="ECO:0007669"/>
    <property type="project" value="InterPro"/>
</dbReference>
<dbReference type="GO" id="GO:0006777">
    <property type="term" value="P:Mo-molybdopterin cofactor biosynthetic process"/>
    <property type="evidence" value="ECO:0007669"/>
    <property type="project" value="UniProtKB-UniRule"/>
</dbReference>
<dbReference type="FunFam" id="3.10.20.10:FF:000003">
    <property type="entry name" value="Sulfur carrier protein FdhD"/>
    <property type="match status" value="1"/>
</dbReference>
<dbReference type="FunFam" id="3.40.140.10:FF:000027">
    <property type="entry name" value="Sulfur carrier protein FdhD"/>
    <property type="match status" value="1"/>
</dbReference>
<dbReference type="Gene3D" id="3.10.20.10">
    <property type="match status" value="1"/>
</dbReference>
<dbReference type="Gene3D" id="3.40.140.10">
    <property type="entry name" value="Cytidine Deaminase, domain 2"/>
    <property type="match status" value="1"/>
</dbReference>
<dbReference type="HAMAP" id="MF_00187">
    <property type="entry name" value="FdhD"/>
    <property type="match status" value="1"/>
</dbReference>
<dbReference type="InterPro" id="IPR016193">
    <property type="entry name" value="Cytidine_deaminase-like"/>
</dbReference>
<dbReference type="InterPro" id="IPR003786">
    <property type="entry name" value="FdhD"/>
</dbReference>
<dbReference type="NCBIfam" id="TIGR00129">
    <property type="entry name" value="fdhD_narQ"/>
    <property type="match status" value="1"/>
</dbReference>
<dbReference type="PANTHER" id="PTHR30592">
    <property type="entry name" value="FORMATE DEHYDROGENASE"/>
    <property type="match status" value="1"/>
</dbReference>
<dbReference type="PANTHER" id="PTHR30592:SF1">
    <property type="entry name" value="SULFUR CARRIER PROTEIN FDHD"/>
    <property type="match status" value="1"/>
</dbReference>
<dbReference type="Pfam" id="PF02634">
    <property type="entry name" value="FdhD-NarQ"/>
    <property type="match status" value="1"/>
</dbReference>
<dbReference type="PIRSF" id="PIRSF015626">
    <property type="entry name" value="FdhD"/>
    <property type="match status" value="1"/>
</dbReference>
<dbReference type="SUPFAM" id="SSF53927">
    <property type="entry name" value="Cytidine deaminase-like"/>
    <property type="match status" value="1"/>
</dbReference>
<keyword id="KW-0963">Cytoplasm</keyword>
<keyword id="KW-0501">Molybdenum cofactor biosynthesis</keyword>
<reference key="1">
    <citation type="journal article" date="2009" name="PLoS Genet.">
        <title>Organised genome dynamics in the Escherichia coli species results in highly diverse adaptive paths.</title>
        <authorList>
            <person name="Touchon M."/>
            <person name="Hoede C."/>
            <person name="Tenaillon O."/>
            <person name="Barbe V."/>
            <person name="Baeriswyl S."/>
            <person name="Bidet P."/>
            <person name="Bingen E."/>
            <person name="Bonacorsi S."/>
            <person name="Bouchier C."/>
            <person name="Bouvet O."/>
            <person name="Calteau A."/>
            <person name="Chiapello H."/>
            <person name="Clermont O."/>
            <person name="Cruveiller S."/>
            <person name="Danchin A."/>
            <person name="Diard M."/>
            <person name="Dossat C."/>
            <person name="Karoui M.E."/>
            <person name="Frapy E."/>
            <person name="Garry L."/>
            <person name="Ghigo J.M."/>
            <person name="Gilles A.M."/>
            <person name="Johnson J."/>
            <person name="Le Bouguenec C."/>
            <person name="Lescat M."/>
            <person name="Mangenot S."/>
            <person name="Martinez-Jehanne V."/>
            <person name="Matic I."/>
            <person name="Nassif X."/>
            <person name="Oztas S."/>
            <person name="Petit M.A."/>
            <person name="Pichon C."/>
            <person name="Rouy Z."/>
            <person name="Ruf C.S."/>
            <person name="Schneider D."/>
            <person name="Tourret J."/>
            <person name="Vacherie B."/>
            <person name="Vallenet D."/>
            <person name="Medigue C."/>
            <person name="Rocha E.P.C."/>
            <person name="Denamur E."/>
        </authorList>
    </citation>
    <scope>NUCLEOTIDE SEQUENCE [LARGE SCALE GENOMIC DNA]</scope>
    <source>
        <strain>UMN026 / ExPEC</strain>
    </source>
</reference>
<sequence>MKKTQQKEIENVTNITGVRQIELWRRDDLQHPRLDEVAEEVPVALVYNGISHVVMMASPKDLEYFALGFSLSEGIIESPRDIFGMDVVPSCNGLEVQIELSSRRFMGLKERRRALAGRTGCGVCGVEQLNDIGKPVQPLPFTQTFDLNKLDDALRHLNDFQPVGQLTGCTHAAAWMLPSGELVGGHEDVGRHVALDKLLGRRSQEGESWQQGAVLVSSRASYEMVQKSAMCGVEILFAVSAATTLAVEVAERCNLTLVGFCKPGRATVYTHPQRLSN</sequence>
<name>FDHD_ECOLU</name>